<comment type="function">
    <text evidence="1">With S4 and S5 plays an important role in translational accuracy.</text>
</comment>
<comment type="function">
    <text evidence="1">Interacts with and stabilizes bases of the 16S rRNA that are involved in tRNA selection in the A site and with the mRNA backbone. Located at the interface of the 30S and 50S subunits, it traverses the body of the 30S subunit contacting proteins on the other side and probably holding the rRNA structure together. The combined cluster of proteins S8, S12 and S17 appears to hold together the shoulder and platform of the 30S subunit (By similarity).</text>
</comment>
<comment type="subunit">
    <text evidence="1">Part of the 30S ribosomal subunit. Contacts proteins S8 and S17. May interact with IF1 in the 30S initiation complex (By similarity).</text>
</comment>
<comment type="miscellaneous">
    <text>The streptomycin sensitive allele is dominant to the resistant allele.</text>
</comment>
<comment type="similarity">
    <text evidence="4">Belongs to the universal ribosomal protein uS12 family.</text>
</comment>
<evidence type="ECO:0000250" key="1"/>
<evidence type="ECO:0000256" key="2">
    <source>
        <dbReference type="SAM" id="MobiDB-lite"/>
    </source>
</evidence>
<evidence type="ECO:0000269" key="3">
    <source>
    </source>
</evidence>
<evidence type="ECO:0000305" key="4"/>
<organism>
    <name type="scientific">Synechococcus elongatus (strain ATCC 33912 / PCC 7942 / FACHB-805)</name>
    <name type="common">Anacystis nidulans R2</name>
    <dbReference type="NCBI Taxonomy" id="1140"/>
    <lineage>
        <taxon>Bacteria</taxon>
        <taxon>Bacillati</taxon>
        <taxon>Cyanobacteriota</taxon>
        <taxon>Cyanophyceae</taxon>
        <taxon>Synechococcales</taxon>
        <taxon>Synechococcaceae</taxon>
        <taxon>Synechococcus</taxon>
    </lineage>
</organism>
<proteinExistence type="inferred from homology"/>
<protein>
    <recommendedName>
        <fullName evidence="4">Small ribosomal subunit protein uS12</fullName>
    </recommendedName>
    <alternativeName>
        <fullName>30S ribosomal protein S12</fullName>
    </alternativeName>
</protein>
<sequence>MPTIQQLIRDEREKITKKTKSPALKNCPQRRGVCTRVYTTTPKKPNSALRKVARVRLTSGFEVTAYIPGIGHNLQEHSVVMIRGGRVKDLPGVRYHIIRGTLDTAGVKDRRQSRSKYGAKRPKA</sequence>
<reference key="1">
    <citation type="journal article" date="2001" name="Microbiology">
        <title>Gene replacement in cyanobacteria mediated by a dominant streptomycin-sensitive rps12 gene that allows selection of mutants free from drug resistance markers.</title>
        <authorList>
            <person name="Matsuoka M."/>
            <person name="Takahama K."/>
            <person name="Ogawa T."/>
        </authorList>
    </citation>
    <scope>NUCLEOTIDE SEQUENCE [GENOMIC DNA]</scope>
    <scope>VARIANT ARG-43</scope>
</reference>
<reference key="2">
    <citation type="submission" date="2005-08" db="EMBL/GenBank/DDBJ databases">
        <title>Complete sequence of chromosome 1 of Synechococcus elongatus PCC 7942.</title>
        <authorList>
            <consortium name="US DOE Joint Genome Institute"/>
            <person name="Copeland A."/>
            <person name="Lucas S."/>
            <person name="Lapidus A."/>
            <person name="Barry K."/>
            <person name="Detter J.C."/>
            <person name="Glavina T."/>
            <person name="Hammon N."/>
            <person name="Israni S."/>
            <person name="Pitluck S."/>
            <person name="Schmutz J."/>
            <person name="Larimer F."/>
            <person name="Land M."/>
            <person name="Kyrpides N."/>
            <person name="Lykidis A."/>
            <person name="Golden S."/>
            <person name="Richardson P."/>
        </authorList>
    </citation>
    <scope>NUCLEOTIDE SEQUENCE [LARGE SCALE GENOMIC DNA]</scope>
    <source>
        <strain>ATCC 33912 / PCC 7942 / FACHB-805</strain>
    </source>
</reference>
<feature type="chain" id="PRO_0000146336" description="Small ribosomal subunit protein uS12">
    <location>
        <begin position="1"/>
        <end position="124"/>
    </location>
</feature>
<feature type="region of interest" description="Disordered" evidence="2">
    <location>
        <begin position="105"/>
        <end position="124"/>
    </location>
</feature>
<feature type="compositionally biased region" description="Basic residues" evidence="2">
    <location>
        <begin position="113"/>
        <end position="124"/>
    </location>
</feature>
<feature type="modified residue" description="3-methylthioaspartic acid" evidence="1">
    <location>
        <position position="89"/>
    </location>
</feature>
<feature type="sequence variant" description="In allele RPS12-R43; confers streptomycin resistance." evidence="3">
    <original>K</original>
    <variation>R</variation>
    <location>
        <position position="43"/>
    </location>
</feature>
<gene>
    <name type="primary">rpsL</name>
    <name type="synonym">rps12</name>
    <name type="ordered locus">Synpcc7942_0887</name>
</gene>
<keyword id="KW-0046">Antibiotic resistance</keyword>
<keyword id="KW-0488">Methylation</keyword>
<keyword id="KW-1185">Reference proteome</keyword>
<keyword id="KW-0687">Ribonucleoprotein</keyword>
<keyword id="KW-0689">Ribosomal protein</keyword>
<keyword id="KW-0694">RNA-binding</keyword>
<keyword id="KW-0699">rRNA-binding</keyword>
<keyword id="KW-0820">tRNA-binding</keyword>
<name>RS12_SYNE7</name>
<accession>P63200</accession>
<accession>P18662</accession>
<accession>Q31PV2</accession>
<dbReference type="EMBL" id="CP000100">
    <property type="protein sequence ID" value="ABB56917.1"/>
    <property type="molecule type" value="Genomic_DNA"/>
</dbReference>
<dbReference type="RefSeq" id="WP_011242965.1">
    <property type="nucleotide sequence ID" value="NZ_JACJTX010000005.1"/>
</dbReference>
<dbReference type="SMR" id="P63200"/>
<dbReference type="STRING" id="1140.Synpcc7942_0887"/>
<dbReference type="PaxDb" id="1140-Synpcc7942_0887"/>
<dbReference type="GeneID" id="72429736"/>
<dbReference type="KEGG" id="syf:Synpcc7942_0887"/>
<dbReference type="eggNOG" id="COG0048">
    <property type="taxonomic scope" value="Bacteria"/>
</dbReference>
<dbReference type="HOGENOM" id="CLU_104295_1_2_3"/>
<dbReference type="OrthoDB" id="9802366at2"/>
<dbReference type="BioCyc" id="SYNEL:SYNPCC7942_0887-MONOMER"/>
<dbReference type="Proteomes" id="UP000889800">
    <property type="component" value="Chromosome"/>
</dbReference>
<dbReference type="GO" id="GO:0015935">
    <property type="term" value="C:small ribosomal subunit"/>
    <property type="evidence" value="ECO:0007669"/>
    <property type="project" value="InterPro"/>
</dbReference>
<dbReference type="GO" id="GO:0019843">
    <property type="term" value="F:rRNA binding"/>
    <property type="evidence" value="ECO:0007669"/>
    <property type="project" value="UniProtKB-UniRule"/>
</dbReference>
<dbReference type="GO" id="GO:0003735">
    <property type="term" value="F:structural constituent of ribosome"/>
    <property type="evidence" value="ECO:0007669"/>
    <property type="project" value="InterPro"/>
</dbReference>
<dbReference type="GO" id="GO:0000049">
    <property type="term" value="F:tRNA binding"/>
    <property type="evidence" value="ECO:0007669"/>
    <property type="project" value="UniProtKB-UniRule"/>
</dbReference>
<dbReference type="GO" id="GO:0046677">
    <property type="term" value="P:response to antibiotic"/>
    <property type="evidence" value="ECO:0007669"/>
    <property type="project" value="UniProtKB-KW"/>
</dbReference>
<dbReference type="GO" id="GO:0006412">
    <property type="term" value="P:translation"/>
    <property type="evidence" value="ECO:0007669"/>
    <property type="project" value="UniProtKB-UniRule"/>
</dbReference>
<dbReference type="CDD" id="cd03368">
    <property type="entry name" value="Ribosomal_S12"/>
    <property type="match status" value="1"/>
</dbReference>
<dbReference type="FunFam" id="2.40.50.140:FF:000001">
    <property type="entry name" value="30S ribosomal protein S12"/>
    <property type="match status" value="1"/>
</dbReference>
<dbReference type="Gene3D" id="2.40.50.140">
    <property type="entry name" value="Nucleic acid-binding proteins"/>
    <property type="match status" value="1"/>
</dbReference>
<dbReference type="HAMAP" id="MF_00403_B">
    <property type="entry name" value="Ribosomal_uS12_B"/>
    <property type="match status" value="1"/>
</dbReference>
<dbReference type="InterPro" id="IPR012340">
    <property type="entry name" value="NA-bd_OB-fold"/>
</dbReference>
<dbReference type="InterPro" id="IPR006032">
    <property type="entry name" value="Ribosomal_uS12"/>
</dbReference>
<dbReference type="InterPro" id="IPR005679">
    <property type="entry name" value="Ribosomal_uS12_bac"/>
</dbReference>
<dbReference type="NCBIfam" id="TIGR00981">
    <property type="entry name" value="rpsL_bact"/>
    <property type="match status" value="1"/>
</dbReference>
<dbReference type="PANTHER" id="PTHR11652">
    <property type="entry name" value="30S RIBOSOMAL PROTEIN S12 FAMILY MEMBER"/>
    <property type="match status" value="1"/>
</dbReference>
<dbReference type="Pfam" id="PF00164">
    <property type="entry name" value="Ribosom_S12_S23"/>
    <property type="match status" value="1"/>
</dbReference>
<dbReference type="PIRSF" id="PIRSF002133">
    <property type="entry name" value="Ribosomal_S12/S23"/>
    <property type="match status" value="1"/>
</dbReference>
<dbReference type="PRINTS" id="PR01034">
    <property type="entry name" value="RIBOSOMALS12"/>
</dbReference>
<dbReference type="SUPFAM" id="SSF50249">
    <property type="entry name" value="Nucleic acid-binding proteins"/>
    <property type="match status" value="1"/>
</dbReference>
<dbReference type="PROSITE" id="PS00055">
    <property type="entry name" value="RIBOSOMAL_S12"/>
    <property type="match status" value="1"/>
</dbReference>